<reference evidence="5 6" key="1">
    <citation type="journal article" date="2006" name="J. Biol. Chem.">
        <title>Myeloid leukemia factor 1 associates with a novel heterogeneous nuclear ribonucleoprotein U-like molecule.</title>
        <authorList>
            <person name="Winteringham L.N."/>
            <person name="Endersby R."/>
            <person name="Kobelke S."/>
            <person name="McCulloch R.K."/>
            <person name="Williams J.H."/>
            <person name="Stillitano J."/>
            <person name="Cornwall S.M."/>
            <person name="Ingley E."/>
            <person name="Klinken S.P."/>
        </authorList>
    </citation>
    <scope>NUCLEOTIDE SEQUENCE [MRNA]</scope>
    <scope>INTERACTION WITH MLF1</scope>
    <scope>SUBCELLULAR LOCATION</scope>
    <source>
        <strain evidence="6">129</strain>
    </source>
</reference>
<reference key="2">
    <citation type="journal article" date="2009" name="PLoS Biol.">
        <title>Lineage-specific biology revealed by a finished genome assembly of the mouse.</title>
        <authorList>
            <person name="Church D.M."/>
            <person name="Goodstadt L."/>
            <person name="Hillier L.W."/>
            <person name="Zody M.C."/>
            <person name="Goldstein S."/>
            <person name="She X."/>
            <person name="Bult C.J."/>
            <person name="Agarwala R."/>
            <person name="Cherry J.L."/>
            <person name="DiCuccio M."/>
            <person name="Hlavina W."/>
            <person name="Kapustin Y."/>
            <person name="Meric P."/>
            <person name="Maglott D."/>
            <person name="Birtle Z."/>
            <person name="Marques A.C."/>
            <person name="Graves T."/>
            <person name="Zhou S."/>
            <person name="Teague B."/>
            <person name="Potamousis K."/>
            <person name="Churas C."/>
            <person name="Place M."/>
            <person name="Herschleb J."/>
            <person name="Runnheim R."/>
            <person name="Forrest D."/>
            <person name="Amos-Landgraf J."/>
            <person name="Schwartz D.C."/>
            <person name="Cheng Z."/>
            <person name="Lindblad-Toh K."/>
            <person name="Eichler E.E."/>
            <person name="Ponting C.P."/>
        </authorList>
    </citation>
    <scope>NUCLEOTIDE SEQUENCE [LARGE SCALE GENOMIC DNA]</scope>
    <source>
        <strain>C57BL/6J</strain>
    </source>
</reference>
<reference key="3">
    <citation type="journal article" date="2007" name="Proc. Natl. Acad. Sci. U.S.A.">
        <title>Large-scale phosphorylation analysis of mouse liver.</title>
        <authorList>
            <person name="Villen J."/>
            <person name="Beausoleil S.A."/>
            <person name="Gerber S.A."/>
            <person name="Gygi S.P."/>
        </authorList>
    </citation>
    <scope>PHOSPHORYLATION [LARGE SCALE ANALYSIS] AT SER-159</scope>
    <scope>IDENTIFICATION BY MASS SPECTROMETRY [LARGE SCALE ANALYSIS]</scope>
    <source>
        <tissue>Liver</tissue>
    </source>
</reference>
<reference key="4">
    <citation type="journal article" date="2008" name="J. Proteome Res.">
        <title>Specific phosphopeptide enrichment with immobilized titanium ion affinity chromatography adsorbent for phosphoproteome analysis.</title>
        <authorList>
            <person name="Zhou H."/>
            <person name="Ye M."/>
            <person name="Dong J."/>
            <person name="Han G."/>
            <person name="Jiang X."/>
            <person name="Wu R."/>
            <person name="Zou H."/>
        </authorList>
    </citation>
    <scope>PHOSPHORYLATION [LARGE SCALE ANALYSIS] AT SER-159</scope>
    <scope>IDENTIFICATION BY MASS SPECTROMETRY [LARGE SCALE ANALYSIS]</scope>
    <source>
        <tissue>Liver</tissue>
    </source>
</reference>
<reference key="5">
    <citation type="journal article" date="2009" name="Immunity">
        <title>The phagosomal proteome in interferon-gamma-activated macrophages.</title>
        <authorList>
            <person name="Trost M."/>
            <person name="English L."/>
            <person name="Lemieux S."/>
            <person name="Courcelles M."/>
            <person name="Desjardins M."/>
            <person name="Thibault P."/>
        </authorList>
    </citation>
    <scope>PHOSPHORYLATION [LARGE SCALE ANALYSIS] AT SER-159</scope>
    <scope>IDENTIFICATION BY MASS SPECTROMETRY [LARGE SCALE ANALYSIS]</scope>
</reference>
<reference key="6">
    <citation type="journal article" date="2010" name="Cell">
        <title>A tissue-specific atlas of mouse protein phosphorylation and expression.</title>
        <authorList>
            <person name="Huttlin E.L."/>
            <person name="Jedrychowski M.P."/>
            <person name="Elias J.E."/>
            <person name="Goswami T."/>
            <person name="Rad R."/>
            <person name="Beausoleil S.A."/>
            <person name="Villen J."/>
            <person name="Haas W."/>
            <person name="Sowa M.E."/>
            <person name="Gygi S.P."/>
        </authorList>
    </citation>
    <scope>PHOSPHORYLATION [LARGE SCALE ANALYSIS] AT SER-159; THR-163; SER-166; SER-183; SER-186; SER-224 AND SER-226</scope>
    <scope>IDENTIFICATION BY MASS SPECTROMETRY [LARGE SCALE ANALYSIS]</scope>
    <source>
        <tissue>Brain</tissue>
        <tissue>Brown adipose tissue</tissue>
        <tissue>Heart</tissue>
        <tissue>Kidney</tissue>
        <tissue>Liver</tissue>
        <tissue>Lung</tissue>
        <tissue>Pancreas</tissue>
        <tissue>Spleen</tissue>
        <tissue>Testis</tissue>
    </source>
</reference>
<reference key="7">
    <citation type="journal article" date="2014" name="Mol. Cell. Proteomics">
        <title>Immunoaffinity enrichment and mass spectrometry analysis of protein methylation.</title>
        <authorList>
            <person name="Guo A."/>
            <person name="Gu H."/>
            <person name="Zhou J."/>
            <person name="Mulhern D."/>
            <person name="Wang Y."/>
            <person name="Lee K.A."/>
            <person name="Yang V."/>
            <person name="Aguiar M."/>
            <person name="Kornhauser J."/>
            <person name="Jia X."/>
            <person name="Ren J."/>
            <person name="Beausoleil S.A."/>
            <person name="Silva J.C."/>
            <person name="Vemulapalli V."/>
            <person name="Bedford M.T."/>
            <person name="Comb M.J."/>
        </authorList>
    </citation>
    <scope>METHYLATION [LARGE SCALE ANALYSIS] AT ARG-654; ARG-682; ARG-736 AND ARG-745</scope>
    <scope>IDENTIFICATION BY MASS SPECTROMETRY [LARGE SCALE ANALYSIS]</scope>
    <source>
        <tissue>Brain</tissue>
        <tissue>Embryo</tissue>
    </source>
</reference>
<accession>Q00PI9</accession>
<accession>F8VPM4</accession>
<feature type="chain" id="PRO_0000278143" description="Heterogeneous nuclear ribonucleoprotein U-like protein 2">
    <location>
        <begin position="1"/>
        <end position="745"/>
    </location>
</feature>
<feature type="domain" description="SAP" evidence="1">
    <location>
        <begin position="3"/>
        <end position="37"/>
    </location>
</feature>
<feature type="domain" description="B30.2/SPRY" evidence="2">
    <location>
        <begin position="224"/>
        <end position="417"/>
    </location>
</feature>
<feature type="region of interest" description="Disordered" evidence="3">
    <location>
        <begin position="44"/>
        <end position="239"/>
    </location>
</feature>
<feature type="region of interest" description="Disordered" evidence="3">
    <location>
        <begin position="625"/>
        <end position="664"/>
    </location>
</feature>
<feature type="compositionally biased region" description="Acidic residues" evidence="3">
    <location>
        <begin position="73"/>
        <end position="97"/>
    </location>
</feature>
<feature type="compositionally biased region" description="Basic and acidic residues" evidence="3">
    <location>
        <begin position="142"/>
        <end position="161"/>
    </location>
</feature>
<feature type="compositionally biased region" description="Basic and acidic residues" evidence="3">
    <location>
        <begin position="183"/>
        <end position="221"/>
    </location>
</feature>
<feature type="compositionally biased region" description="Acidic residues" evidence="3">
    <location>
        <begin position="230"/>
        <end position="239"/>
    </location>
</feature>
<feature type="compositionally biased region" description="Basic and acidic residues" evidence="3">
    <location>
        <begin position="625"/>
        <end position="637"/>
    </location>
</feature>
<feature type="compositionally biased region" description="Basic residues" evidence="3">
    <location>
        <begin position="638"/>
        <end position="652"/>
    </location>
</feature>
<feature type="modified residue" description="Phosphoserine" evidence="7 8 9 10">
    <location>
        <position position="159"/>
    </location>
</feature>
<feature type="modified residue" description="Phosphothreonine" evidence="10">
    <location>
        <position position="163"/>
    </location>
</feature>
<feature type="modified residue" description="Phosphoserine" evidence="10">
    <location>
        <position position="166"/>
    </location>
</feature>
<feature type="modified residue" description="Phosphoserine" evidence="10">
    <location>
        <position position="183"/>
    </location>
</feature>
<feature type="modified residue" description="Phosphoserine" evidence="10">
    <location>
        <position position="186"/>
    </location>
</feature>
<feature type="modified residue" description="Phosphoserine" evidence="10">
    <location>
        <position position="224"/>
    </location>
</feature>
<feature type="modified residue" description="Phosphoserine" evidence="10">
    <location>
        <position position="226"/>
    </location>
</feature>
<feature type="modified residue" description="Omega-N-methylarginine" evidence="11">
    <location>
        <position position="654"/>
    </location>
</feature>
<feature type="modified residue" description="Omega-N-methylarginine" evidence="11">
    <location>
        <position position="682"/>
    </location>
</feature>
<feature type="modified residue" description="Omega-N-methylarginine" evidence="11">
    <location>
        <position position="736"/>
    </location>
</feature>
<feature type="modified residue" description="Omega-N-methylarginine" evidence="11">
    <location>
        <position position="745"/>
    </location>
</feature>
<feature type="sequence conflict" description="In Ref. 1; AAY44301." evidence="5" ref="1">
    <original>S</original>
    <variation>F</variation>
    <location>
        <position position="277"/>
    </location>
</feature>
<dbReference type="EMBL" id="DQ000354">
    <property type="protein sequence ID" value="AAY44301.1"/>
    <property type="molecule type" value="mRNA"/>
</dbReference>
<dbReference type="EMBL" id="AC129217">
    <property type="status" value="NOT_ANNOTATED_CDS"/>
    <property type="molecule type" value="Genomic_DNA"/>
</dbReference>
<dbReference type="CCDS" id="CCDS37908.1"/>
<dbReference type="RefSeq" id="NP_001074665.1">
    <property type="nucleotide sequence ID" value="NM_001081196.1"/>
</dbReference>
<dbReference type="SMR" id="Q00PI9"/>
<dbReference type="BioGRID" id="212995">
    <property type="interactions" value="26"/>
</dbReference>
<dbReference type="FunCoup" id="Q00PI9">
    <property type="interactions" value="4218"/>
</dbReference>
<dbReference type="IntAct" id="Q00PI9">
    <property type="interactions" value="10"/>
</dbReference>
<dbReference type="MINT" id="Q00PI9"/>
<dbReference type="STRING" id="10090.ENSMUSP00000094515"/>
<dbReference type="GlyGen" id="Q00PI9">
    <property type="glycosylation" value="1 site, 1 O-linked glycan (1 site)"/>
</dbReference>
<dbReference type="iPTMnet" id="Q00PI9"/>
<dbReference type="MetOSite" id="Q00PI9"/>
<dbReference type="PhosphoSitePlus" id="Q00PI9"/>
<dbReference type="SwissPalm" id="Q00PI9"/>
<dbReference type="jPOST" id="Q00PI9"/>
<dbReference type="PaxDb" id="10090-ENSMUSP00000094515"/>
<dbReference type="PeptideAtlas" id="Q00PI9"/>
<dbReference type="ProteomicsDB" id="273372"/>
<dbReference type="Pumba" id="Q00PI9"/>
<dbReference type="DNASU" id="68693"/>
<dbReference type="Ensembl" id="ENSMUST00000096753.5">
    <property type="protein sequence ID" value="ENSMUSP00000094515.4"/>
    <property type="gene ID" value="ENSMUSG00000071659.5"/>
</dbReference>
<dbReference type="GeneID" id="68693"/>
<dbReference type="KEGG" id="mmu:68693"/>
<dbReference type="UCSC" id="uc008gng.1">
    <property type="organism name" value="mouse"/>
</dbReference>
<dbReference type="AGR" id="MGI:1915943"/>
<dbReference type="CTD" id="221092"/>
<dbReference type="MGI" id="MGI:1915943">
    <property type="gene designation" value="Hnrnpul2"/>
</dbReference>
<dbReference type="VEuPathDB" id="HostDB:ENSMUSG00000071659"/>
<dbReference type="eggNOG" id="KOG2242">
    <property type="taxonomic scope" value="Eukaryota"/>
</dbReference>
<dbReference type="GeneTree" id="ENSGT00940000160376"/>
<dbReference type="HOGENOM" id="CLU_012140_1_0_1"/>
<dbReference type="InParanoid" id="Q00PI9"/>
<dbReference type="OMA" id="DSRGLKM"/>
<dbReference type="OrthoDB" id="445357at2759"/>
<dbReference type="PhylomeDB" id="Q00PI9"/>
<dbReference type="TreeFam" id="TF317301"/>
<dbReference type="BioGRID-ORCS" id="68693">
    <property type="hits" value="3 hits in 77 CRISPR screens"/>
</dbReference>
<dbReference type="ChiTaRS" id="Hnrnpul2">
    <property type="organism name" value="mouse"/>
</dbReference>
<dbReference type="PRO" id="PR:Q00PI9"/>
<dbReference type="Proteomes" id="UP000000589">
    <property type="component" value="Chromosome 19"/>
</dbReference>
<dbReference type="RNAct" id="Q00PI9">
    <property type="molecule type" value="protein"/>
</dbReference>
<dbReference type="Bgee" id="ENSMUSG00000071659">
    <property type="expression patterns" value="Expressed in ureter smooth muscle and 264 other cell types or tissues"/>
</dbReference>
<dbReference type="GO" id="GO:0005654">
    <property type="term" value="C:nucleoplasm"/>
    <property type="evidence" value="ECO:0007669"/>
    <property type="project" value="Ensembl"/>
</dbReference>
<dbReference type="GO" id="GO:0005634">
    <property type="term" value="C:nucleus"/>
    <property type="evidence" value="ECO:0000314"/>
    <property type="project" value="UniProtKB"/>
</dbReference>
<dbReference type="GO" id="GO:0045202">
    <property type="term" value="C:synapse"/>
    <property type="evidence" value="ECO:0000314"/>
    <property type="project" value="SynGO"/>
</dbReference>
<dbReference type="CDD" id="cd12884">
    <property type="entry name" value="SPRY_hnRNP"/>
    <property type="match status" value="1"/>
</dbReference>
<dbReference type="FunFam" id="2.60.120.920:FF:000006">
    <property type="entry name" value="heterogeneous nuclear ribonucleoprotein U isoform X1"/>
    <property type="match status" value="1"/>
</dbReference>
<dbReference type="FunFam" id="3.40.50.300:FF:000355">
    <property type="entry name" value="Heterogeneous nuclear ribonucleoprotein U-like 1, isoform CRA_a"/>
    <property type="match status" value="1"/>
</dbReference>
<dbReference type="FunFam" id="1.10.720.30:FF:000017">
    <property type="entry name" value="heterogeneous nuclear ribonucleoprotein U-like protein 2"/>
    <property type="match status" value="1"/>
</dbReference>
<dbReference type="Gene3D" id="2.60.120.920">
    <property type="match status" value="1"/>
</dbReference>
<dbReference type="Gene3D" id="3.40.50.300">
    <property type="entry name" value="P-loop containing nucleotide triphosphate hydrolases"/>
    <property type="match status" value="1"/>
</dbReference>
<dbReference type="Gene3D" id="1.10.720.30">
    <property type="entry name" value="SAP domain"/>
    <property type="match status" value="1"/>
</dbReference>
<dbReference type="InterPro" id="IPR001870">
    <property type="entry name" value="B30.2/SPRY"/>
</dbReference>
<dbReference type="InterPro" id="IPR043136">
    <property type="entry name" value="B30.2/SPRY_sf"/>
</dbReference>
<dbReference type="InterPro" id="IPR013320">
    <property type="entry name" value="ConA-like_dom_sf"/>
</dbReference>
<dbReference type="InterPro" id="IPR027417">
    <property type="entry name" value="P-loop_NTPase"/>
</dbReference>
<dbReference type="InterPro" id="IPR003034">
    <property type="entry name" value="SAP_dom"/>
</dbReference>
<dbReference type="InterPro" id="IPR036361">
    <property type="entry name" value="SAP_dom_sf"/>
</dbReference>
<dbReference type="InterPro" id="IPR003877">
    <property type="entry name" value="SPRY_dom"/>
</dbReference>
<dbReference type="InterPro" id="IPR035778">
    <property type="entry name" value="SPRY_hnRNP_U"/>
</dbReference>
<dbReference type="PANTHER" id="PTHR12381">
    <property type="entry name" value="HETEROGENEOUS NUCLEAR RIBONUCLEOPROTEIN U FAMILY MEMBER"/>
    <property type="match status" value="1"/>
</dbReference>
<dbReference type="PANTHER" id="PTHR12381:SF66">
    <property type="entry name" value="HETEROGENEOUS NUCLEAR RIBONUCLEOPROTEIN U-LIKE PROTEIN 2"/>
    <property type="match status" value="1"/>
</dbReference>
<dbReference type="Pfam" id="PF13671">
    <property type="entry name" value="AAA_33"/>
    <property type="match status" value="1"/>
</dbReference>
<dbReference type="Pfam" id="PF02037">
    <property type="entry name" value="SAP"/>
    <property type="match status" value="1"/>
</dbReference>
<dbReference type="Pfam" id="PF00622">
    <property type="entry name" value="SPRY"/>
    <property type="match status" value="1"/>
</dbReference>
<dbReference type="SMART" id="SM00513">
    <property type="entry name" value="SAP"/>
    <property type="match status" value="1"/>
</dbReference>
<dbReference type="SMART" id="SM00449">
    <property type="entry name" value="SPRY"/>
    <property type="match status" value="1"/>
</dbReference>
<dbReference type="SUPFAM" id="SSF49899">
    <property type="entry name" value="Concanavalin A-like lectins/glucanases"/>
    <property type="match status" value="1"/>
</dbReference>
<dbReference type="SUPFAM" id="SSF52540">
    <property type="entry name" value="P-loop containing nucleoside triphosphate hydrolases"/>
    <property type="match status" value="1"/>
</dbReference>
<dbReference type="SUPFAM" id="SSF68906">
    <property type="entry name" value="SAP domain"/>
    <property type="match status" value="1"/>
</dbReference>
<dbReference type="PROSITE" id="PS50188">
    <property type="entry name" value="B302_SPRY"/>
    <property type="match status" value="1"/>
</dbReference>
<dbReference type="PROSITE" id="PS50800">
    <property type="entry name" value="SAP"/>
    <property type="match status" value="1"/>
</dbReference>
<name>HNRL2_MOUSE</name>
<sequence>MEVKRLKVTELRSELQRRGLDSRGLKMDLAQRLQEALDAEMLEDEAGVGGAGPGGACKAEPRPVAASGGGPGGDEEEEDDDEEEDEEALLEDEDEEPPPAQALGQAAQPPPEPPETSAMEAESEASDTPAEATAGSGGVNGGEEHDNGKGEEDGPEERSGDETPGSEAPGDKAVEEQGDDQDSEKSKPAGSDGERRGVKRQRDEKDEHGRAYYEFREEAYHSRSKSPPPPEEEAKDEEEDQTLVNLDTYTSDLHFQISKDRYGGQPLFSEKFPTLWSGARSTYGVTKGKVCFEAKVTQNLPMKEGCTEVSLLRVGWSVDFSCSQLGEDEFSYGFDGRGLKAENGQFEEFGQTFGENDVIGCFANFETEEVELSFSKNGEDLGVAFRISKESLADRALLPHVLCKNCVVELNFGQKEEPFFPPPEEFVFIHAVPVEERVRTAVPPKTIEECEVILMVGLPGSGKTQWALKYAKDNPERRYNVLGAETVLTQMRMKGLEEPEMDPKSRDLLVQQASQCLSKLVQIASRSKRNFILDQCNVYNSGQRRKLLLFKTFSRKVVVVVPNEEDWKRRLELRKEVEGDDVPESIMLEMKANFSLPEKCDYMDEVTYGELEKEEAQPIVTKYKEEARKLLPPSEKRTNRRNNRNKRNRQNRSRGQGYVGGQRRGYDNRAYGQQYWGQSGNRGGYRNFYDRYRGDYERFYSRDYEYNRYRDYYRQYNRDWQNYYYHHQQDRDRYYRNYYGYQGYR</sequence>
<proteinExistence type="evidence at protein level"/>
<comment type="subunit">
    <text evidence="4">Binds to MLF1 and retains it in the nucleus.</text>
</comment>
<comment type="subcellular location">
    <subcellularLocation>
        <location evidence="4">Nucleus</location>
    </subcellularLocation>
</comment>
<keyword id="KW-0488">Methylation</keyword>
<keyword id="KW-0539">Nucleus</keyword>
<keyword id="KW-0597">Phosphoprotein</keyword>
<keyword id="KW-1185">Reference proteome</keyword>
<evidence type="ECO:0000255" key="1">
    <source>
        <dbReference type="PROSITE-ProRule" id="PRU00186"/>
    </source>
</evidence>
<evidence type="ECO:0000255" key="2">
    <source>
        <dbReference type="PROSITE-ProRule" id="PRU00548"/>
    </source>
</evidence>
<evidence type="ECO:0000256" key="3">
    <source>
        <dbReference type="SAM" id="MobiDB-lite"/>
    </source>
</evidence>
<evidence type="ECO:0000269" key="4">
    <source>
    </source>
</evidence>
<evidence type="ECO:0000305" key="5"/>
<evidence type="ECO:0000312" key="6">
    <source>
        <dbReference type="EMBL" id="AAY44301.1"/>
    </source>
</evidence>
<evidence type="ECO:0007744" key="7">
    <source>
    </source>
</evidence>
<evidence type="ECO:0007744" key="8">
    <source>
    </source>
</evidence>
<evidence type="ECO:0007744" key="9">
    <source>
    </source>
</evidence>
<evidence type="ECO:0007744" key="10">
    <source>
    </source>
</evidence>
<evidence type="ECO:0007744" key="11">
    <source>
    </source>
</evidence>
<protein>
    <recommendedName>
        <fullName>Heterogeneous nuclear ribonucleoprotein U-like protein 2</fullName>
    </recommendedName>
    <alternativeName>
        <fullName>MLF1-associated nuclear protein</fullName>
    </alternativeName>
</protein>
<organism>
    <name type="scientific">Mus musculus</name>
    <name type="common">Mouse</name>
    <dbReference type="NCBI Taxonomy" id="10090"/>
    <lineage>
        <taxon>Eukaryota</taxon>
        <taxon>Metazoa</taxon>
        <taxon>Chordata</taxon>
        <taxon>Craniata</taxon>
        <taxon>Vertebrata</taxon>
        <taxon>Euteleostomi</taxon>
        <taxon>Mammalia</taxon>
        <taxon>Eutheria</taxon>
        <taxon>Euarchontoglires</taxon>
        <taxon>Glires</taxon>
        <taxon>Rodentia</taxon>
        <taxon>Myomorpha</taxon>
        <taxon>Muroidea</taxon>
        <taxon>Muridae</taxon>
        <taxon>Murinae</taxon>
        <taxon>Mus</taxon>
        <taxon>Mus</taxon>
    </lineage>
</organism>
<gene>
    <name type="primary">Hnrnpul2</name>
    <name type="synonym">Hnrpul2</name>
    <name evidence="6" type="synonym">Manp</name>
</gene>